<gene>
    <name type="ordered locus">ML1908</name>
</gene>
<sequence>MALKTDIRGMVWRYSDYFIVGREQCREFARAIKCDHPAYFSEDAAAELGYDAIVAPLTFVTIFAKYVQLDFFRNVDVGMETMQIVQVDQRFVFHKPVLVGDKLWARMDIHSVSERFGADIVVTKNSCTSDDGELVMEAYTTLMGQQGDNSSQLKWDKESGQVIRSA</sequence>
<proteinExistence type="inferred from homology"/>
<protein>
    <recommendedName>
        <fullName evidence="1">UPF0336 protein ML1908</fullName>
    </recommendedName>
</protein>
<keyword id="KW-1185">Reference proteome</keyword>
<accession>Q9CBJ8</accession>
<evidence type="ECO:0000255" key="1">
    <source>
        <dbReference type="HAMAP-Rule" id="MF_00799"/>
    </source>
</evidence>
<dbReference type="EMBL" id="AL583923">
    <property type="protein sequence ID" value="CAC30862.1"/>
    <property type="molecule type" value="Genomic_DNA"/>
</dbReference>
<dbReference type="PIR" id="F87147">
    <property type="entry name" value="F87147"/>
</dbReference>
<dbReference type="RefSeq" id="NP_302285.1">
    <property type="nucleotide sequence ID" value="NC_002677.1"/>
</dbReference>
<dbReference type="SMR" id="Q9CBJ8"/>
<dbReference type="STRING" id="272631.gene:17575757"/>
<dbReference type="KEGG" id="mle:ML1908"/>
<dbReference type="PATRIC" id="fig|272631.5.peg.3616"/>
<dbReference type="Leproma" id="ML1908"/>
<dbReference type="eggNOG" id="COG2030">
    <property type="taxonomic scope" value="Bacteria"/>
</dbReference>
<dbReference type="HOGENOM" id="CLU_116276_0_1_11"/>
<dbReference type="OrthoDB" id="5415111at2"/>
<dbReference type="Proteomes" id="UP000000806">
    <property type="component" value="Chromosome"/>
</dbReference>
<dbReference type="GO" id="GO:0019171">
    <property type="term" value="F:(3R)-hydroxyacyl-[acyl-carrier-protein] dehydratase activity"/>
    <property type="evidence" value="ECO:0007669"/>
    <property type="project" value="TreeGrafter"/>
</dbReference>
<dbReference type="GO" id="GO:0006633">
    <property type="term" value="P:fatty acid biosynthetic process"/>
    <property type="evidence" value="ECO:0007669"/>
    <property type="project" value="TreeGrafter"/>
</dbReference>
<dbReference type="CDD" id="cd03441">
    <property type="entry name" value="R_hydratase_like"/>
    <property type="match status" value="1"/>
</dbReference>
<dbReference type="Gene3D" id="3.10.129.10">
    <property type="entry name" value="Hotdog Thioesterase"/>
    <property type="match status" value="1"/>
</dbReference>
<dbReference type="HAMAP" id="MF_00799">
    <property type="entry name" value="UPF0336"/>
    <property type="match status" value="1"/>
</dbReference>
<dbReference type="InterPro" id="IPR039569">
    <property type="entry name" value="FAS1-like_DH_region"/>
</dbReference>
<dbReference type="InterPro" id="IPR016709">
    <property type="entry name" value="HadA-like"/>
</dbReference>
<dbReference type="InterPro" id="IPR029069">
    <property type="entry name" value="HotDog_dom_sf"/>
</dbReference>
<dbReference type="InterPro" id="IPR050965">
    <property type="entry name" value="UPF0336/Enoyl-CoA_hydratase"/>
</dbReference>
<dbReference type="NCBIfam" id="NF010244">
    <property type="entry name" value="PRK13691.1"/>
    <property type="match status" value="1"/>
</dbReference>
<dbReference type="PANTHER" id="PTHR43437:SF3">
    <property type="entry name" value="HYDROXYACYL-THIOESTER DEHYDRATASE TYPE 2, MITOCHONDRIAL"/>
    <property type="match status" value="1"/>
</dbReference>
<dbReference type="PANTHER" id="PTHR43437">
    <property type="entry name" value="HYDROXYACYL-THIOESTER DEHYDRATASE TYPE 2, MITOCHONDRIAL-RELATED"/>
    <property type="match status" value="1"/>
</dbReference>
<dbReference type="Pfam" id="PF13452">
    <property type="entry name" value="FAS1_DH_region"/>
    <property type="match status" value="1"/>
</dbReference>
<dbReference type="PIRSF" id="PIRSF018072">
    <property type="entry name" value="UCP018072"/>
    <property type="match status" value="1"/>
</dbReference>
<dbReference type="SUPFAM" id="SSF54637">
    <property type="entry name" value="Thioesterase/thiol ester dehydrase-isomerase"/>
    <property type="match status" value="1"/>
</dbReference>
<organism>
    <name type="scientific">Mycobacterium leprae (strain TN)</name>
    <dbReference type="NCBI Taxonomy" id="272631"/>
    <lineage>
        <taxon>Bacteria</taxon>
        <taxon>Bacillati</taxon>
        <taxon>Actinomycetota</taxon>
        <taxon>Actinomycetes</taxon>
        <taxon>Mycobacteriales</taxon>
        <taxon>Mycobacteriaceae</taxon>
        <taxon>Mycobacterium</taxon>
    </lineage>
</organism>
<comment type="similarity">
    <text evidence="1">Belongs to the UPF0336 family.</text>
</comment>
<reference key="1">
    <citation type="journal article" date="2001" name="Nature">
        <title>Massive gene decay in the leprosy bacillus.</title>
        <authorList>
            <person name="Cole S.T."/>
            <person name="Eiglmeier K."/>
            <person name="Parkhill J."/>
            <person name="James K.D."/>
            <person name="Thomson N.R."/>
            <person name="Wheeler P.R."/>
            <person name="Honore N."/>
            <person name="Garnier T."/>
            <person name="Churcher C.M."/>
            <person name="Harris D.E."/>
            <person name="Mungall K.L."/>
            <person name="Basham D."/>
            <person name="Brown D."/>
            <person name="Chillingworth T."/>
            <person name="Connor R."/>
            <person name="Davies R.M."/>
            <person name="Devlin K."/>
            <person name="Duthoy S."/>
            <person name="Feltwell T."/>
            <person name="Fraser A."/>
            <person name="Hamlin N."/>
            <person name="Holroyd S."/>
            <person name="Hornsby T."/>
            <person name="Jagels K."/>
            <person name="Lacroix C."/>
            <person name="Maclean J."/>
            <person name="Moule S."/>
            <person name="Murphy L.D."/>
            <person name="Oliver K."/>
            <person name="Quail M.A."/>
            <person name="Rajandream M.A."/>
            <person name="Rutherford K.M."/>
            <person name="Rutter S."/>
            <person name="Seeger K."/>
            <person name="Simon S."/>
            <person name="Simmonds M."/>
            <person name="Skelton J."/>
            <person name="Squares R."/>
            <person name="Squares S."/>
            <person name="Stevens K."/>
            <person name="Taylor K."/>
            <person name="Whitehead S."/>
            <person name="Woodward J.R."/>
            <person name="Barrell B.G."/>
        </authorList>
    </citation>
    <scope>NUCLEOTIDE SEQUENCE [LARGE SCALE GENOMIC DNA]</scope>
    <source>
        <strain>TN</strain>
    </source>
</reference>
<name>Y1908_MYCLE</name>
<feature type="chain" id="PRO_0000216137" description="UPF0336 protein ML1908">
    <location>
        <begin position="1"/>
        <end position="166"/>
    </location>
</feature>